<accession>Q84VW9</accession>
<accession>O81357</accession>
<accession>Q0WTJ7</accession>
<evidence type="ECO:0000250" key="1"/>
<evidence type="ECO:0000250" key="2">
    <source>
        <dbReference type="UniProtKB" id="Q9MAH0"/>
    </source>
</evidence>
<evidence type="ECO:0000269" key="3">
    <source>
    </source>
</evidence>
<evidence type="ECO:0000305" key="4"/>
<evidence type="ECO:0007829" key="5">
    <source>
        <dbReference type="PDB" id="5FDN"/>
    </source>
</evidence>
<reference key="1">
    <citation type="submission" date="1998-06" db="EMBL/GenBank/DDBJ databases">
        <title>Arabidopsis thaliana phosphoenolpyruvate carboxylase full-length cDNA.</title>
        <authorList>
            <person name="Paterson K.M."/>
            <person name="Nimmo H.G."/>
        </authorList>
    </citation>
    <scope>NUCLEOTIDE SEQUENCE [MRNA]</scope>
    <source>
        <strain>cv. Columbia</strain>
    </source>
</reference>
<reference key="2">
    <citation type="submission" date="1998-12" db="EMBL/GenBank/DDBJ databases">
        <title>Genomic structure of PEPC in Arabidopsis thaliana.</title>
        <authorList>
            <person name="Hartung F."/>
        </authorList>
    </citation>
    <scope>NUCLEOTIDE SEQUENCE [GENOMIC DNA]</scope>
    <source>
        <strain>cv. Columbia</strain>
        <tissue>Seedling</tissue>
    </source>
</reference>
<reference key="3">
    <citation type="journal article" date="2000" name="DNA Res.">
        <title>Structural analysis of Arabidopsis thaliana chromosome 3. II. Sequence features of the 4,251,695 bp regions covered by 90 P1, TAC and BAC clones.</title>
        <authorList>
            <person name="Kaneko T."/>
            <person name="Katoh T."/>
            <person name="Sato S."/>
            <person name="Nakamura Y."/>
            <person name="Asamizu E."/>
            <person name="Tabata S."/>
        </authorList>
    </citation>
    <scope>NUCLEOTIDE SEQUENCE [LARGE SCALE GENOMIC DNA]</scope>
    <source>
        <strain>cv. Columbia</strain>
    </source>
</reference>
<reference key="4">
    <citation type="journal article" date="2017" name="Plant J.">
        <title>Araport11: a complete reannotation of the Arabidopsis thaliana reference genome.</title>
        <authorList>
            <person name="Cheng C.Y."/>
            <person name="Krishnakumar V."/>
            <person name="Chan A.P."/>
            <person name="Thibaud-Nissen F."/>
            <person name="Schobel S."/>
            <person name="Town C.D."/>
        </authorList>
    </citation>
    <scope>GENOME REANNOTATION</scope>
    <source>
        <strain>cv. Columbia</strain>
    </source>
</reference>
<reference key="5">
    <citation type="journal article" date="2003" name="Science">
        <title>Empirical analysis of transcriptional activity in the Arabidopsis genome.</title>
        <authorList>
            <person name="Yamada K."/>
            <person name="Lim J."/>
            <person name="Dale J.M."/>
            <person name="Chen H."/>
            <person name="Shinn P."/>
            <person name="Palm C.J."/>
            <person name="Southwick A.M."/>
            <person name="Wu H.C."/>
            <person name="Kim C.J."/>
            <person name="Nguyen M."/>
            <person name="Pham P.K."/>
            <person name="Cheuk R.F."/>
            <person name="Karlin-Newmann G."/>
            <person name="Liu S.X."/>
            <person name="Lam B."/>
            <person name="Sakano H."/>
            <person name="Wu T."/>
            <person name="Yu G."/>
            <person name="Miranda M."/>
            <person name="Quach H.L."/>
            <person name="Tripp M."/>
            <person name="Chang C.H."/>
            <person name="Lee J.M."/>
            <person name="Toriumi M.J."/>
            <person name="Chan M.M."/>
            <person name="Tang C.C."/>
            <person name="Onodera C.S."/>
            <person name="Deng J.M."/>
            <person name="Akiyama K."/>
            <person name="Ansari Y."/>
            <person name="Arakawa T."/>
            <person name="Banh J."/>
            <person name="Banno F."/>
            <person name="Bowser L."/>
            <person name="Brooks S.Y."/>
            <person name="Carninci P."/>
            <person name="Chao Q."/>
            <person name="Choy N."/>
            <person name="Enju A."/>
            <person name="Goldsmith A.D."/>
            <person name="Gurjal M."/>
            <person name="Hansen N.F."/>
            <person name="Hayashizaki Y."/>
            <person name="Johnson-Hopson C."/>
            <person name="Hsuan V.W."/>
            <person name="Iida K."/>
            <person name="Karnes M."/>
            <person name="Khan S."/>
            <person name="Koesema E."/>
            <person name="Ishida J."/>
            <person name="Jiang P.X."/>
            <person name="Jones T."/>
            <person name="Kawai J."/>
            <person name="Kamiya A."/>
            <person name="Meyers C."/>
            <person name="Nakajima M."/>
            <person name="Narusaka M."/>
            <person name="Seki M."/>
            <person name="Sakurai T."/>
            <person name="Satou M."/>
            <person name="Tamse R."/>
            <person name="Vaysberg M."/>
            <person name="Wallender E.K."/>
            <person name="Wong C."/>
            <person name="Yamamura Y."/>
            <person name="Yuan S."/>
            <person name="Shinozaki K."/>
            <person name="Davis R.W."/>
            <person name="Theologis A."/>
            <person name="Ecker J.R."/>
        </authorList>
    </citation>
    <scope>NUCLEOTIDE SEQUENCE [LARGE SCALE MRNA]</scope>
    <source>
        <strain>cv. Columbia</strain>
    </source>
</reference>
<reference key="6">
    <citation type="submission" date="2006-07" db="EMBL/GenBank/DDBJ databases">
        <title>Large-scale analysis of RIKEN Arabidopsis full-length (RAFL) cDNAs.</title>
        <authorList>
            <person name="Totoki Y."/>
            <person name="Seki M."/>
            <person name="Ishida J."/>
            <person name="Nakajima M."/>
            <person name="Enju A."/>
            <person name="Kamiya A."/>
            <person name="Narusaka M."/>
            <person name="Shin-i T."/>
            <person name="Nakagawa M."/>
            <person name="Sakamoto N."/>
            <person name="Oishi K."/>
            <person name="Kohara Y."/>
            <person name="Kobayashi M."/>
            <person name="Toyoda A."/>
            <person name="Sakaki Y."/>
            <person name="Sakurai T."/>
            <person name="Iida K."/>
            <person name="Akiyama K."/>
            <person name="Satou M."/>
            <person name="Toyoda T."/>
            <person name="Konagaya A."/>
            <person name="Carninci P."/>
            <person name="Kawai J."/>
            <person name="Hayashizaki Y."/>
            <person name="Shinozaki K."/>
        </authorList>
    </citation>
    <scope>NUCLEOTIDE SEQUENCE [LARGE SCALE MRNA]</scope>
    <source>
        <strain>cv. Columbia</strain>
    </source>
</reference>
<reference key="7">
    <citation type="journal article" date="2003" name="Plant Physiol.">
        <title>Identification and expression analysis of a gene encoding a bacterial-type phosphoenolpyruvate carboxylase from Arabidopsis and rice.</title>
        <authorList>
            <person name="Sanchez R."/>
            <person name="Cejudo F.J."/>
        </authorList>
    </citation>
    <scope>TISSUE SPECIFICITY</scope>
    <scope>NOMENCLATURE</scope>
    <source>
        <strain>cv. Columbia</strain>
    </source>
</reference>
<organism>
    <name type="scientific">Arabidopsis thaliana</name>
    <name type="common">Mouse-ear cress</name>
    <dbReference type="NCBI Taxonomy" id="3702"/>
    <lineage>
        <taxon>Eukaryota</taxon>
        <taxon>Viridiplantae</taxon>
        <taxon>Streptophyta</taxon>
        <taxon>Embryophyta</taxon>
        <taxon>Tracheophyta</taxon>
        <taxon>Spermatophyta</taxon>
        <taxon>Magnoliopsida</taxon>
        <taxon>eudicotyledons</taxon>
        <taxon>Gunneridae</taxon>
        <taxon>Pentapetalae</taxon>
        <taxon>rosids</taxon>
        <taxon>malvids</taxon>
        <taxon>Brassicales</taxon>
        <taxon>Brassicaceae</taxon>
        <taxon>Camelineae</taxon>
        <taxon>Arabidopsis</taxon>
    </lineage>
</organism>
<comment type="function">
    <text>Through the carboxylation of phosphoenolpyruvate (PEP) it forms oxaloacetate, a four-carbon dicarboxylic acid source for the tricarboxylic acid cycle.</text>
</comment>
<comment type="catalytic activity">
    <reaction>
        <text>oxaloacetate + phosphate = phosphoenolpyruvate + hydrogencarbonate</text>
        <dbReference type="Rhea" id="RHEA:28370"/>
        <dbReference type="ChEBI" id="CHEBI:16452"/>
        <dbReference type="ChEBI" id="CHEBI:17544"/>
        <dbReference type="ChEBI" id="CHEBI:43474"/>
        <dbReference type="ChEBI" id="CHEBI:58702"/>
        <dbReference type="EC" id="4.1.1.31"/>
    </reaction>
</comment>
<comment type="cofactor">
    <cofactor evidence="1">
        <name>Mg(2+)</name>
        <dbReference type="ChEBI" id="CHEBI:18420"/>
    </cofactor>
</comment>
<comment type="activity regulation">
    <text evidence="1">By light-reversible phosphorylation.</text>
</comment>
<comment type="subunit">
    <text evidence="1">Homotetramer.</text>
</comment>
<comment type="subcellular location">
    <subcellularLocation>
        <location evidence="1">Cytoplasm</location>
    </subcellularLocation>
</comment>
<comment type="tissue specificity">
    <text evidence="3">Expressed in roots and siliques, and to a lower extent in stems, leaves and flowers.</text>
</comment>
<comment type="similarity">
    <text evidence="4">Belongs to the PEPCase type 1 family.</text>
</comment>
<name>CAPP3_ARATH</name>
<sequence length="968" mass="110160">MAGRNIEKMASIDAQLRQLVPAKVSEDDKLVEYDALLLDRFLDILQDLHGEDLRETVQELYELSAEYEGKREPSKLEELGSVLTSLDPGDSIVISKAFSHMLNLANLAEEVQIAHRRRIKKLKKGDFVDESSATTESDIEETFKRLVSDLGKSPEEIFDALKNQTVDLVLTAHPTQSVRRSLLQKHGRIRDCLAQLYAKDITPDDKQELDESLQREIQAAFRTDEIRRTPPTPQDEMRAGMSYFHETIWKGVPKFLRRVDTALKNIGIDERVPYNAPLIQFSSWMGGDRDGNPRVTPEVTRDVCLLARMMAANLYYNQIENLMFELSMWRCTDEFRVRADELHRNSRKDAAKHYIEFWKTIPPTEPYRVILGDVRDKLYHTRERSRQLLSNGISDIPEEATFTNVEQFLEPLELCYRSLCSCGDSPIADGSLLDFLRQVSTFGLSLVRLDIRQESERHTDVLDAITKHLDIGSSYRDWSEEGRQEWLLAELSGKRPLFGPDLPKTEEISDVLDTFKVISELPSDCFGAYIISMATSPSDVLAVELLQRECHVKNPLRVVPLFEKLADLEAAPAAVARLFSIDWYKNRINGKQEVMIGYSDSGKDAGRLSAAWELYKAQEELVKVAKKYGVKLTMFHGRGGTVGRGGGPTHLAILSQPPDTVNGSLRVTVQGEVIEQSFGEAHLCFRTLQRFTAATLEHGMNPPISPKPEWRALLDEMAVVATEEYRSVVFQEPRFVEYFRLATPELEYGRMNIGSRPSKRKPSGGIESLRAIPWIFAWTQTRFHLPVWLGFGAAFRYAIKKDVRNLHMLQDMYKQWPFFRVTIDLIEMVFAKGDPGIAALYDKLLVSEDLWAFGEKLRANFDETKNLVLQTAGHKDLLEGDPYLKQRLRLRDSYITTLNVCQAYTLKRIRDANYNVTLRPHISKEIMQSSKSAQELVKLNPTSEYAPGLEDTLILTMKGIAAGLQNTG</sequence>
<proteinExistence type="evidence at protein level"/>
<dbReference type="EC" id="4.1.1.31"/>
<dbReference type="EMBL" id="AF071788">
    <property type="protein sequence ID" value="AAC24594.1"/>
    <property type="molecule type" value="mRNA"/>
</dbReference>
<dbReference type="EMBL" id="AJ131710">
    <property type="protein sequence ID" value="CAA10486.1"/>
    <property type="molecule type" value="Genomic_DNA"/>
</dbReference>
<dbReference type="EMBL" id="AP000370">
    <property type="protein sequence ID" value="BAA97057.1"/>
    <property type="molecule type" value="Genomic_DNA"/>
</dbReference>
<dbReference type="EMBL" id="CP002686">
    <property type="protein sequence ID" value="AEE75592.1"/>
    <property type="molecule type" value="Genomic_DNA"/>
</dbReference>
<dbReference type="EMBL" id="CP002686">
    <property type="protein sequence ID" value="ANM64773.1"/>
    <property type="molecule type" value="Genomic_DNA"/>
</dbReference>
<dbReference type="EMBL" id="BT004642">
    <property type="protein sequence ID" value="AAO42888.1"/>
    <property type="molecule type" value="mRNA"/>
</dbReference>
<dbReference type="EMBL" id="AK227556">
    <property type="protein sequence ID" value="BAE99551.1"/>
    <property type="molecule type" value="mRNA"/>
</dbReference>
<dbReference type="PIR" id="T52186">
    <property type="entry name" value="T52186"/>
</dbReference>
<dbReference type="RefSeq" id="NP_001326778.1">
    <property type="nucleotide sequence ID" value="NM_001338141.1"/>
</dbReference>
<dbReference type="RefSeq" id="NP_188112.1">
    <property type="nucleotide sequence ID" value="NM_112356.4"/>
</dbReference>
<dbReference type="PDB" id="5FDN">
    <property type="method" value="X-ray"/>
    <property type="resolution" value="2.20 A"/>
    <property type="chains" value="A/B=1-968"/>
</dbReference>
<dbReference type="PDBsum" id="5FDN"/>
<dbReference type="SMR" id="Q84VW9"/>
<dbReference type="BioGRID" id="6057">
    <property type="interactions" value="9"/>
</dbReference>
<dbReference type="FunCoup" id="Q84VW9">
    <property type="interactions" value="305"/>
</dbReference>
<dbReference type="STRING" id="3702.Q84VW9"/>
<dbReference type="iPTMnet" id="Q84VW9"/>
<dbReference type="PaxDb" id="3702-AT3G14940.1"/>
<dbReference type="ProteomicsDB" id="239094"/>
<dbReference type="EnsemblPlants" id="AT3G14940.1">
    <property type="protein sequence ID" value="AT3G14940.1"/>
    <property type="gene ID" value="AT3G14940"/>
</dbReference>
<dbReference type="EnsemblPlants" id="AT3G14940.2">
    <property type="protein sequence ID" value="AT3G14940.2"/>
    <property type="gene ID" value="AT3G14940"/>
</dbReference>
<dbReference type="GeneID" id="820723"/>
<dbReference type="Gramene" id="AT3G14940.1">
    <property type="protein sequence ID" value="AT3G14940.1"/>
    <property type="gene ID" value="AT3G14940"/>
</dbReference>
<dbReference type="Gramene" id="AT3G14940.2">
    <property type="protein sequence ID" value="AT3G14940.2"/>
    <property type="gene ID" value="AT3G14940"/>
</dbReference>
<dbReference type="KEGG" id="ath:AT3G14940"/>
<dbReference type="Araport" id="AT3G14940"/>
<dbReference type="TAIR" id="AT3G14940">
    <property type="gene designation" value="PPC3"/>
</dbReference>
<dbReference type="eggNOG" id="ENOG502QPVS">
    <property type="taxonomic scope" value="Eukaryota"/>
</dbReference>
<dbReference type="HOGENOM" id="CLU_006557_2_0_1"/>
<dbReference type="InParanoid" id="Q84VW9"/>
<dbReference type="OMA" id="QEMYNNW"/>
<dbReference type="PhylomeDB" id="Q84VW9"/>
<dbReference type="BioCyc" id="ARA:AT3G14940-MONOMER"/>
<dbReference type="BioCyc" id="MetaCyc:AT3G14940-MONOMER"/>
<dbReference type="BRENDA" id="4.1.1.31">
    <property type="organism ID" value="399"/>
</dbReference>
<dbReference type="PRO" id="PR:Q84VW9"/>
<dbReference type="Proteomes" id="UP000006548">
    <property type="component" value="Chromosome 3"/>
</dbReference>
<dbReference type="ExpressionAtlas" id="Q84VW9">
    <property type="expression patterns" value="baseline and differential"/>
</dbReference>
<dbReference type="GO" id="GO:0005829">
    <property type="term" value="C:cytosol"/>
    <property type="evidence" value="ECO:0007005"/>
    <property type="project" value="TAIR"/>
</dbReference>
<dbReference type="GO" id="GO:0008964">
    <property type="term" value="F:phosphoenolpyruvate carboxylase activity"/>
    <property type="evidence" value="ECO:0000314"/>
    <property type="project" value="TAIR"/>
</dbReference>
<dbReference type="GO" id="GO:0015977">
    <property type="term" value="P:carbon fixation"/>
    <property type="evidence" value="ECO:0007669"/>
    <property type="project" value="UniProtKB-KW"/>
</dbReference>
<dbReference type="GO" id="GO:0015979">
    <property type="term" value="P:photosynthesis"/>
    <property type="evidence" value="ECO:0007669"/>
    <property type="project" value="UniProtKB-KW"/>
</dbReference>
<dbReference type="GO" id="GO:0006099">
    <property type="term" value="P:tricarboxylic acid cycle"/>
    <property type="evidence" value="ECO:0007669"/>
    <property type="project" value="InterPro"/>
</dbReference>
<dbReference type="FunFam" id="1.20.1440.90:FF:000001">
    <property type="entry name" value="Phosphoenolpyruvate carboxylase 1"/>
    <property type="match status" value="1"/>
</dbReference>
<dbReference type="Gene3D" id="1.20.1440.90">
    <property type="entry name" value="Phosphoenolpyruvate/pyruvate domain"/>
    <property type="match status" value="1"/>
</dbReference>
<dbReference type="HAMAP" id="MF_00595">
    <property type="entry name" value="PEPcase_type1"/>
    <property type="match status" value="1"/>
</dbReference>
<dbReference type="InterPro" id="IPR021135">
    <property type="entry name" value="PEP_COase"/>
</dbReference>
<dbReference type="InterPro" id="IPR022805">
    <property type="entry name" value="PEP_COase_bac/pln-type"/>
</dbReference>
<dbReference type="InterPro" id="IPR018129">
    <property type="entry name" value="PEP_COase_Lys_AS"/>
</dbReference>
<dbReference type="InterPro" id="IPR033129">
    <property type="entry name" value="PEPCASE_His_AS"/>
</dbReference>
<dbReference type="InterPro" id="IPR015813">
    <property type="entry name" value="Pyrv/PenolPyrv_kinase-like_dom"/>
</dbReference>
<dbReference type="NCBIfam" id="NF000584">
    <property type="entry name" value="PRK00009.1"/>
    <property type="match status" value="1"/>
</dbReference>
<dbReference type="PANTHER" id="PTHR30523">
    <property type="entry name" value="PHOSPHOENOLPYRUVATE CARBOXYLASE"/>
    <property type="match status" value="1"/>
</dbReference>
<dbReference type="PANTHER" id="PTHR30523:SF33">
    <property type="entry name" value="PHOSPHOENOLPYRUVATE CARBOXYLASE 3"/>
    <property type="match status" value="1"/>
</dbReference>
<dbReference type="Pfam" id="PF00311">
    <property type="entry name" value="PEPcase"/>
    <property type="match status" value="1"/>
</dbReference>
<dbReference type="PRINTS" id="PR00150">
    <property type="entry name" value="PEPCARBXLASE"/>
</dbReference>
<dbReference type="SUPFAM" id="SSF51621">
    <property type="entry name" value="Phosphoenolpyruvate/pyruvate domain"/>
    <property type="match status" value="1"/>
</dbReference>
<dbReference type="PROSITE" id="PS00781">
    <property type="entry name" value="PEPCASE_1"/>
    <property type="match status" value="1"/>
</dbReference>
<dbReference type="PROSITE" id="PS00393">
    <property type="entry name" value="PEPCASE_2"/>
    <property type="match status" value="1"/>
</dbReference>
<feature type="chain" id="PRO_0000166659" description="Phosphoenolpyruvate carboxylase 3">
    <location>
        <begin position="1"/>
        <end position="968"/>
    </location>
</feature>
<feature type="active site" evidence="1">
    <location>
        <position position="173"/>
    </location>
</feature>
<feature type="active site" evidence="1">
    <location>
        <position position="603"/>
    </location>
</feature>
<feature type="modified residue" description="Phosphoserine" evidence="2">
    <location>
        <position position="11"/>
    </location>
</feature>
<feature type="modified residue" description="Phosphoserine" evidence="2">
    <location>
        <position position="705"/>
    </location>
</feature>
<feature type="sequence conflict" description="In Ref. 5; AAO42888 and 6; BAE99551." evidence="4" ref="5 6">
    <original>H</original>
    <variation>R</variation>
    <location>
        <position position="245"/>
    </location>
</feature>
<feature type="helix" evidence="5">
    <location>
        <begin position="30"/>
        <end position="49"/>
    </location>
</feature>
<feature type="helix" evidence="5">
    <location>
        <begin position="51"/>
        <end position="70"/>
    </location>
</feature>
<feature type="helix" evidence="5">
    <location>
        <begin position="73"/>
        <end position="84"/>
    </location>
</feature>
<feature type="helix" evidence="5">
    <location>
        <begin position="88"/>
        <end position="115"/>
    </location>
</feature>
<feature type="helix" evidence="5">
    <location>
        <begin position="120"/>
        <end position="122"/>
    </location>
</feature>
<feature type="helix" evidence="5">
    <location>
        <begin position="127"/>
        <end position="131"/>
    </location>
</feature>
<feature type="turn" evidence="5">
    <location>
        <begin position="133"/>
        <end position="135"/>
    </location>
</feature>
<feature type="helix" evidence="5">
    <location>
        <begin position="139"/>
        <end position="150"/>
    </location>
</feature>
<feature type="helix" evidence="5">
    <location>
        <begin position="154"/>
        <end position="162"/>
    </location>
</feature>
<feature type="strand" evidence="5">
    <location>
        <begin position="165"/>
        <end position="170"/>
    </location>
</feature>
<feature type="helix" evidence="5">
    <location>
        <begin position="180"/>
        <end position="196"/>
    </location>
</feature>
<feature type="helix" evidence="5">
    <location>
        <begin position="203"/>
        <end position="221"/>
    </location>
</feature>
<feature type="helix" evidence="5">
    <location>
        <begin position="233"/>
        <end position="240"/>
    </location>
</feature>
<feature type="helix" evidence="5">
    <location>
        <begin position="243"/>
        <end position="246"/>
    </location>
</feature>
<feature type="helix" evidence="5">
    <location>
        <begin position="248"/>
        <end position="264"/>
    </location>
</feature>
<feature type="turn" evidence="5">
    <location>
        <begin position="265"/>
        <end position="267"/>
    </location>
</feature>
<feature type="strand" evidence="5">
    <location>
        <begin position="278"/>
        <end position="283"/>
    </location>
</feature>
<feature type="turn" evidence="5">
    <location>
        <begin position="285"/>
        <end position="287"/>
    </location>
</feature>
<feature type="helix" evidence="5">
    <location>
        <begin position="297"/>
        <end position="325"/>
    </location>
</feature>
<feature type="helix" evidence="5">
    <location>
        <begin position="333"/>
        <end position="340"/>
    </location>
</feature>
<feature type="helix" evidence="5">
    <location>
        <begin position="366"/>
        <end position="391"/>
    </location>
</feature>
<feature type="helix" evidence="5">
    <location>
        <begin position="398"/>
        <end position="400"/>
    </location>
</feature>
<feature type="helix" evidence="5">
    <location>
        <begin position="405"/>
        <end position="421"/>
    </location>
</feature>
<feature type="helix" evidence="5">
    <location>
        <begin position="425"/>
        <end position="428"/>
    </location>
</feature>
<feature type="helix" evidence="5">
    <location>
        <begin position="431"/>
        <end position="442"/>
    </location>
</feature>
<feature type="turn" evidence="5">
    <location>
        <begin position="443"/>
        <end position="445"/>
    </location>
</feature>
<feature type="strand" evidence="5">
    <location>
        <begin position="446"/>
        <end position="454"/>
    </location>
</feature>
<feature type="helix" evidence="5">
    <location>
        <begin position="455"/>
        <end position="468"/>
    </location>
</feature>
<feature type="helix" evidence="5">
    <location>
        <begin position="475"/>
        <end position="477"/>
    </location>
</feature>
<feature type="helix" evidence="5">
    <location>
        <begin position="480"/>
        <end position="492"/>
    </location>
</feature>
<feature type="helix" evidence="5">
    <location>
        <begin position="506"/>
        <end position="520"/>
    </location>
</feature>
<feature type="helix" evidence="5">
    <location>
        <begin position="523"/>
        <end position="525"/>
    </location>
</feature>
<feature type="strand" evidence="5">
    <location>
        <begin position="526"/>
        <end position="532"/>
    </location>
</feature>
<feature type="helix" evidence="5">
    <location>
        <begin position="537"/>
        <end position="549"/>
    </location>
</feature>
<feature type="strand" evidence="5">
    <location>
        <begin position="557"/>
        <end position="562"/>
    </location>
</feature>
<feature type="helix" evidence="5">
    <location>
        <begin position="565"/>
        <end position="580"/>
    </location>
</feature>
<feature type="helix" evidence="5">
    <location>
        <begin position="582"/>
        <end position="588"/>
    </location>
</feature>
<feature type="strand" evidence="5">
    <location>
        <begin position="591"/>
        <end position="596"/>
    </location>
</feature>
<feature type="helix" evidence="5">
    <location>
        <begin position="598"/>
        <end position="605"/>
    </location>
</feature>
<feature type="helix" evidence="5">
    <location>
        <begin position="607"/>
        <end position="628"/>
    </location>
</feature>
<feature type="strand" evidence="5">
    <location>
        <begin position="631"/>
        <end position="636"/>
    </location>
</feature>
<feature type="helix" evidence="5">
    <location>
        <begin position="641"/>
        <end position="643"/>
    </location>
</feature>
<feature type="helix" evidence="5">
    <location>
        <begin position="648"/>
        <end position="654"/>
    </location>
</feature>
<feature type="strand" evidence="5">
    <location>
        <begin position="664"/>
        <end position="669"/>
    </location>
</feature>
<feature type="helix" evidence="5">
    <location>
        <begin position="671"/>
        <end position="678"/>
    </location>
</feature>
<feature type="helix" evidence="5">
    <location>
        <begin position="681"/>
        <end position="700"/>
    </location>
</feature>
<feature type="helix" evidence="5">
    <location>
        <begin position="708"/>
        <end position="729"/>
    </location>
</feature>
<feature type="helix" evidence="5">
    <location>
        <begin position="735"/>
        <end position="742"/>
    </location>
</feature>
<feature type="helix" evidence="5">
    <location>
        <begin position="745"/>
        <end position="750"/>
    </location>
</feature>
<feature type="turn" evidence="5">
    <location>
        <begin position="766"/>
        <end position="768"/>
    </location>
</feature>
<feature type="helix" evidence="5">
    <location>
        <begin position="771"/>
        <end position="780"/>
    </location>
</feature>
<feature type="helix" evidence="5">
    <location>
        <begin position="785"/>
        <end position="788"/>
    </location>
</feature>
<feature type="helix" evidence="5">
    <location>
        <begin position="791"/>
        <end position="801"/>
    </location>
</feature>
<feature type="helix" evidence="5">
    <location>
        <begin position="805"/>
        <end position="815"/>
    </location>
</feature>
<feature type="helix" evidence="5">
    <location>
        <begin position="817"/>
        <end position="831"/>
    </location>
</feature>
<feature type="helix" evidence="5">
    <location>
        <begin position="835"/>
        <end position="845"/>
    </location>
</feature>
<feature type="helix" evidence="5">
    <location>
        <begin position="848"/>
        <end position="850"/>
    </location>
</feature>
<feature type="helix" evidence="5">
    <location>
        <begin position="851"/>
        <end position="872"/>
    </location>
</feature>
<feature type="turn" evidence="5">
    <location>
        <begin position="877"/>
        <end position="880"/>
    </location>
</feature>
<feature type="helix" evidence="5">
    <location>
        <begin position="882"/>
        <end position="910"/>
    </location>
</feature>
<feature type="helix" evidence="5">
    <location>
        <begin position="949"/>
        <end position="964"/>
    </location>
</feature>
<keyword id="KW-0002">3D-structure</keyword>
<keyword id="KW-0021">Allosteric enzyme</keyword>
<keyword id="KW-0120">Carbon dioxide fixation</keyword>
<keyword id="KW-0963">Cytoplasm</keyword>
<keyword id="KW-0456">Lyase</keyword>
<keyword id="KW-0460">Magnesium</keyword>
<keyword id="KW-0597">Phosphoprotein</keyword>
<keyword id="KW-0602">Photosynthesis</keyword>
<keyword id="KW-1185">Reference proteome</keyword>
<gene>
    <name type="primary">PPC3</name>
    <name type="synonym">PEPC</name>
    <name type="synonym">PPC</name>
    <name type="ordered locus">At3g14940</name>
    <name type="ORF">K15M2.8</name>
</gene>
<protein>
    <recommendedName>
        <fullName>Phosphoenolpyruvate carboxylase 3</fullName>
        <shortName>AtPPC3</shortName>
        <shortName>PEPC 3</shortName>
        <shortName>PEPCase 3</shortName>
        <ecNumber>4.1.1.31</ecNumber>
    </recommendedName>
</protein>